<keyword id="KW-0328">Glycosyltransferase</keyword>
<keyword id="KW-0808">Transferase</keyword>
<comment type="function">
    <text evidence="2">Catalyzes the reversible phosphorolytic breakdown of the N-glycosidic bond in the beta-(deoxy)ribonucleoside molecules, with the formation of the corresponding free purine bases and pentose-1-phosphate.</text>
</comment>
<comment type="catalytic activity">
    <reaction evidence="2">
        <text>a purine D-ribonucleoside + phosphate = a purine nucleobase + alpha-D-ribose 1-phosphate</text>
        <dbReference type="Rhea" id="RHEA:19805"/>
        <dbReference type="ChEBI" id="CHEBI:26386"/>
        <dbReference type="ChEBI" id="CHEBI:43474"/>
        <dbReference type="ChEBI" id="CHEBI:57720"/>
        <dbReference type="ChEBI" id="CHEBI:142355"/>
        <dbReference type="EC" id="2.4.2.1"/>
    </reaction>
</comment>
<comment type="catalytic activity">
    <reaction evidence="2">
        <text>a purine 2'-deoxy-D-ribonucleoside + phosphate = a purine nucleobase + 2-deoxy-alpha-D-ribose 1-phosphate</text>
        <dbReference type="Rhea" id="RHEA:36431"/>
        <dbReference type="ChEBI" id="CHEBI:26386"/>
        <dbReference type="ChEBI" id="CHEBI:43474"/>
        <dbReference type="ChEBI" id="CHEBI:57259"/>
        <dbReference type="ChEBI" id="CHEBI:142361"/>
        <dbReference type="EC" id="2.4.2.1"/>
    </reaction>
</comment>
<comment type="subunit">
    <text evidence="2">Homohexamer; trimer of homodimers.</text>
</comment>
<comment type="similarity">
    <text evidence="2">Belongs to the PNP/UDP phosphorylase family.</text>
</comment>
<reference key="1">
    <citation type="journal article" date="2008" name="Genome Res.">
        <title>Comparative genome analysis of Salmonella enteritidis PT4 and Salmonella gallinarum 287/91 provides insights into evolutionary and host adaptation pathways.</title>
        <authorList>
            <person name="Thomson N.R."/>
            <person name="Clayton D.J."/>
            <person name="Windhorst D."/>
            <person name="Vernikos G."/>
            <person name="Davidson S."/>
            <person name="Churcher C."/>
            <person name="Quail M.A."/>
            <person name="Stevens M."/>
            <person name="Jones M.A."/>
            <person name="Watson M."/>
            <person name="Barron A."/>
            <person name="Layton A."/>
            <person name="Pickard D."/>
            <person name="Kingsley R.A."/>
            <person name="Bignell A."/>
            <person name="Clark L."/>
            <person name="Harris B."/>
            <person name="Ormond D."/>
            <person name="Abdellah Z."/>
            <person name="Brooks K."/>
            <person name="Cherevach I."/>
            <person name="Chillingworth T."/>
            <person name="Woodward J."/>
            <person name="Norberczak H."/>
            <person name="Lord A."/>
            <person name="Arrowsmith C."/>
            <person name="Jagels K."/>
            <person name="Moule S."/>
            <person name="Mungall K."/>
            <person name="Saunders M."/>
            <person name="Whitehead S."/>
            <person name="Chabalgoity J.A."/>
            <person name="Maskell D."/>
            <person name="Humphreys T."/>
            <person name="Roberts M."/>
            <person name="Barrow P.A."/>
            <person name="Dougan G."/>
            <person name="Parkhill J."/>
        </authorList>
    </citation>
    <scope>NUCLEOTIDE SEQUENCE [LARGE SCALE GENOMIC DNA]</scope>
    <source>
        <strain>287/91 / NCTC 13346</strain>
    </source>
</reference>
<dbReference type="EC" id="2.4.2.1" evidence="2"/>
<dbReference type="EMBL" id="AM933173">
    <property type="protein sequence ID" value="CAR40158.1"/>
    <property type="molecule type" value="Genomic_DNA"/>
</dbReference>
<dbReference type="RefSeq" id="WP_000224872.1">
    <property type="nucleotide sequence ID" value="NC_011274.1"/>
</dbReference>
<dbReference type="SMR" id="B5R9V2"/>
<dbReference type="KEGG" id="seg:SG4396"/>
<dbReference type="HOGENOM" id="CLU_068457_2_0_6"/>
<dbReference type="Proteomes" id="UP000008321">
    <property type="component" value="Chromosome"/>
</dbReference>
<dbReference type="GO" id="GO:0005829">
    <property type="term" value="C:cytosol"/>
    <property type="evidence" value="ECO:0007669"/>
    <property type="project" value="TreeGrafter"/>
</dbReference>
<dbReference type="GO" id="GO:0004731">
    <property type="term" value="F:purine-nucleoside phosphorylase activity"/>
    <property type="evidence" value="ECO:0007669"/>
    <property type="project" value="UniProtKB-UniRule"/>
</dbReference>
<dbReference type="GO" id="GO:0006152">
    <property type="term" value="P:purine nucleoside catabolic process"/>
    <property type="evidence" value="ECO:0007669"/>
    <property type="project" value="TreeGrafter"/>
</dbReference>
<dbReference type="CDD" id="cd09006">
    <property type="entry name" value="PNP_EcPNPI-like"/>
    <property type="match status" value="1"/>
</dbReference>
<dbReference type="FunFam" id="3.40.50.1580:FF:000002">
    <property type="entry name" value="Purine nucleoside phosphorylase DeoD-type"/>
    <property type="match status" value="1"/>
</dbReference>
<dbReference type="Gene3D" id="3.40.50.1580">
    <property type="entry name" value="Nucleoside phosphorylase domain"/>
    <property type="match status" value="1"/>
</dbReference>
<dbReference type="HAMAP" id="MF_01627">
    <property type="entry name" value="Pur_nucleosid_phosp"/>
    <property type="match status" value="1"/>
</dbReference>
<dbReference type="InterPro" id="IPR004402">
    <property type="entry name" value="DeoD-type"/>
</dbReference>
<dbReference type="InterPro" id="IPR018016">
    <property type="entry name" value="Nucleoside_phosphorylase_CS"/>
</dbReference>
<dbReference type="InterPro" id="IPR000845">
    <property type="entry name" value="Nucleoside_phosphorylase_d"/>
</dbReference>
<dbReference type="InterPro" id="IPR035994">
    <property type="entry name" value="Nucleoside_phosphorylase_sf"/>
</dbReference>
<dbReference type="NCBIfam" id="TIGR00107">
    <property type="entry name" value="deoD"/>
    <property type="match status" value="1"/>
</dbReference>
<dbReference type="NCBIfam" id="NF004489">
    <property type="entry name" value="PRK05819.1"/>
    <property type="match status" value="1"/>
</dbReference>
<dbReference type="NCBIfam" id="NF009914">
    <property type="entry name" value="PRK13374.1"/>
    <property type="match status" value="1"/>
</dbReference>
<dbReference type="PANTHER" id="PTHR43691:SF2">
    <property type="entry name" value="PURINE NUCLEOSIDE PHOSPHORYLASE DEOD-TYPE"/>
    <property type="match status" value="1"/>
</dbReference>
<dbReference type="PANTHER" id="PTHR43691">
    <property type="entry name" value="URIDINE PHOSPHORYLASE"/>
    <property type="match status" value="1"/>
</dbReference>
<dbReference type="Pfam" id="PF01048">
    <property type="entry name" value="PNP_UDP_1"/>
    <property type="match status" value="1"/>
</dbReference>
<dbReference type="SUPFAM" id="SSF53167">
    <property type="entry name" value="Purine and uridine phosphorylases"/>
    <property type="match status" value="1"/>
</dbReference>
<dbReference type="PROSITE" id="PS01232">
    <property type="entry name" value="PNP_UDP_1"/>
    <property type="match status" value="1"/>
</dbReference>
<feature type="chain" id="PRO_1000186217" description="Purine nucleoside phosphorylase DeoD-type">
    <location>
        <begin position="1"/>
        <end position="239"/>
    </location>
</feature>
<feature type="active site" description="Proton donor" evidence="2">
    <location>
        <position position="205"/>
    </location>
</feature>
<feature type="binding site" evidence="1">
    <location>
        <position position="5"/>
    </location>
    <ligand>
        <name>a purine D-ribonucleoside</name>
        <dbReference type="ChEBI" id="CHEBI:142355"/>
        <note>ligand shared between dimeric partners</note>
    </ligand>
</feature>
<feature type="binding site" description="in other chain" evidence="1">
    <location>
        <position position="21"/>
    </location>
    <ligand>
        <name>phosphate</name>
        <dbReference type="ChEBI" id="CHEBI:43474"/>
        <note>ligand shared between dimeric partners</note>
    </ligand>
</feature>
<feature type="binding site" description="in other chain" evidence="1">
    <location>
        <position position="25"/>
    </location>
    <ligand>
        <name>phosphate</name>
        <dbReference type="ChEBI" id="CHEBI:43474"/>
        <note>ligand shared between dimeric partners</note>
    </ligand>
</feature>
<feature type="binding site" evidence="1">
    <location>
        <position position="44"/>
    </location>
    <ligand>
        <name>phosphate</name>
        <dbReference type="ChEBI" id="CHEBI:43474"/>
        <note>ligand shared between dimeric partners</note>
    </ligand>
</feature>
<feature type="binding site" description="in other chain" evidence="1">
    <location>
        <begin position="88"/>
        <end position="91"/>
    </location>
    <ligand>
        <name>phosphate</name>
        <dbReference type="ChEBI" id="CHEBI:43474"/>
        <note>ligand shared between dimeric partners</note>
    </ligand>
</feature>
<feature type="binding site" description="in other chain" evidence="1">
    <location>
        <begin position="180"/>
        <end position="182"/>
    </location>
    <ligand>
        <name>a purine D-ribonucleoside</name>
        <dbReference type="ChEBI" id="CHEBI:142355"/>
        <note>ligand shared between dimeric partners</note>
    </ligand>
</feature>
<feature type="binding site" description="in other chain" evidence="1">
    <location>
        <begin position="204"/>
        <end position="205"/>
    </location>
    <ligand>
        <name>a purine D-ribonucleoside</name>
        <dbReference type="ChEBI" id="CHEBI:142355"/>
        <note>ligand shared between dimeric partners</note>
    </ligand>
</feature>
<feature type="site" description="Important for catalytic activity" evidence="2">
    <location>
        <position position="218"/>
    </location>
</feature>
<gene>
    <name evidence="2" type="primary">deoD</name>
    <name type="ordered locus">SG4396</name>
</gene>
<protein>
    <recommendedName>
        <fullName evidence="2">Purine nucleoside phosphorylase DeoD-type</fullName>
        <shortName evidence="2">PNP</shortName>
        <ecNumber evidence="2">2.4.2.1</ecNumber>
    </recommendedName>
</protein>
<proteinExistence type="inferred from homology"/>
<accession>B5R9V2</accession>
<evidence type="ECO:0000250" key="1">
    <source>
        <dbReference type="UniProtKB" id="P50389"/>
    </source>
</evidence>
<evidence type="ECO:0000255" key="2">
    <source>
        <dbReference type="HAMAP-Rule" id="MF_01627"/>
    </source>
</evidence>
<organism>
    <name type="scientific">Salmonella gallinarum (strain 287/91 / NCTC 13346)</name>
    <dbReference type="NCBI Taxonomy" id="550538"/>
    <lineage>
        <taxon>Bacteria</taxon>
        <taxon>Pseudomonadati</taxon>
        <taxon>Pseudomonadota</taxon>
        <taxon>Gammaproteobacteria</taxon>
        <taxon>Enterobacterales</taxon>
        <taxon>Enterobacteriaceae</taxon>
        <taxon>Salmonella</taxon>
    </lineage>
</organism>
<sequence>MATPHINAEMGDFADVVLMPGDPLRAKHIAETSLEDVREVNNVRGMLGFTGTYKGRKISVMGHGMGIPSCSIYTKELITDFGVKKIIRVGSCGAVRMDVKLSDVVIGMGACTDSKVNRIRFKDHDFAAIADFDMVRNAVDAAKALGVDARVGNLFSADLFYSPDGEMFDVMEKYGVLGVEMEAAGIYGVAAEFGAKALTICTVSDHIRTHEQTTAAERQTTFNDMIKIALESVLLGDQE</sequence>
<name>DEOD_SALG2</name>